<gene>
    <name evidence="1" type="primary">purC</name>
    <name type="ordered locus">SPP_0109</name>
</gene>
<accession>C1CHV6</accession>
<organism>
    <name type="scientific">Streptococcus pneumoniae (strain P1031)</name>
    <dbReference type="NCBI Taxonomy" id="488223"/>
    <lineage>
        <taxon>Bacteria</taxon>
        <taxon>Bacillati</taxon>
        <taxon>Bacillota</taxon>
        <taxon>Bacilli</taxon>
        <taxon>Lactobacillales</taxon>
        <taxon>Streptococcaceae</taxon>
        <taxon>Streptococcus</taxon>
    </lineage>
</organism>
<proteinExistence type="inferred from homology"/>
<sequence>MSKQLIYSGKAKDIYTTEDENLIISTYKDQATAFNGVKKEQIAGKGVLNNQISSFIFEKLNAAGVATHFVEKLSDTEQLNKKVKIIPLEVVLRNYTAGSFSKRFGVDEGIALETPIVEFYYKNDDLDDPFINDEHVKFLQIADDQQIAYLKEETRRINELLKVWFAEIGLKLIDFKLEFGFDKDGKIILADEFSPDNCRLWDADGNHMDKDVFRRGLGELTDVYEIVWEKLQELK</sequence>
<dbReference type="EC" id="6.3.2.6" evidence="1"/>
<dbReference type="EMBL" id="CP000920">
    <property type="protein sequence ID" value="ACO21168.1"/>
    <property type="molecule type" value="Genomic_DNA"/>
</dbReference>
<dbReference type="RefSeq" id="WP_000043300.1">
    <property type="nucleotide sequence ID" value="NC_012467.1"/>
</dbReference>
<dbReference type="SMR" id="C1CHV6"/>
<dbReference type="GeneID" id="45652446"/>
<dbReference type="KEGG" id="spp:SPP_0109"/>
<dbReference type="HOGENOM" id="CLU_061495_2_0_9"/>
<dbReference type="UniPathway" id="UPA00074">
    <property type="reaction ID" value="UER00131"/>
</dbReference>
<dbReference type="GO" id="GO:0005524">
    <property type="term" value="F:ATP binding"/>
    <property type="evidence" value="ECO:0007669"/>
    <property type="project" value="UniProtKB-KW"/>
</dbReference>
<dbReference type="GO" id="GO:0004639">
    <property type="term" value="F:phosphoribosylaminoimidazolesuccinocarboxamide synthase activity"/>
    <property type="evidence" value="ECO:0007669"/>
    <property type="project" value="UniProtKB-UniRule"/>
</dbReference>
<dbReference type="GO" id="GO:0006189">
    <property type="term" value="P:'de novo' IMP biosynthetic process"/>
    <property type="evidence" value="ECO:0007669"/>
    <property type="project" value="UniProtKB-UniRule"/>
</dbReference>
<dbReference type="GO" id="GO:0009236">
    <property type="term" value="P:cobalamin biosynthetic process"/>
    <property type="evidence" value="ECO:0007669"/>
    <property type="project" value="InterPro"/>
</dbReference>
<dbReference type="CDD" id="cd01415">
    <property type="entry name" value="SAICAR_synt_PurC"/>
    <property type="match status" value="1"/>
</dbReference>
<dbReference type="FunFam" id="3.30.200.20:FF:000189">
    <property type="entry name" value="Phosphoribosylaminoimidazole-succinocarboxamide synthase"/>
    <property type="match status" value="1"/>
</dbReference>
<dbReference type="FunFam" id="3.30.470.20:FF:000006">
    <property type="entry name" value="Phosphoribosylaminoimidazole-succinocarboxamide synthase"/>
    <property type="match status" value="1"/>
</dbReference>
<dbReference type="Gene3D" id="3.30.470.20">
    <property type="entry name" value="ATP-grasp fold, B domain"/>
    <property type="match status" value="1"/>
</dbReference>
<dbReference type="Gene3D" id="3.30.200.20">
    <property type="entry name" value="Phosphorylase Kinase, domain 1"/>
    <property type="match status" value="1"/>
</dbReference>
<dbReference type="HAMAP" id="MF_00137">
    <property type="entry name" value="SAICAR_synth"/>
    <property type="match status" value="1"/>
</dbReference>
<dbReference type="InterPro" id="IPR028923">
    <property type="entry name" value="SAICAR_synt/ADE2_N"/>
</dbReference>
<dbReference type="InterPro" id="IPR033934">
    <property type="entry name" value="SAICAR_synt_PurC"/>
</dbReference>
<dbReference type="InterPro" id="IPR001636">
    <property type="entry name" value="SAICAR_synth"/>
</dbReference>
<dbReference type="InterPro" id="IPR050089">
    <property type="entry name" value="SAICAR_synthetase"/>
</dbReference>
<dbReference type="InterPro" id="IPR018236">
    <property type="entry name" value="SAICAR_synthetase_CS"/>
</dbReference>
<dbReference type="NCBIfam" id="TIGR00081">
    <property type="entry name" value="purC"/>
    <property type="match status" value="1"/>
</dbReference>
<dbReference type="PANTHER" id="PTHR43599">
    <property type="entry name" value="MULTIFUNCTIONAL PROTEIN ADE2"/>
    <property type="match status" value="1"/>
</dbReference>
<dbReference type="PANTHER" id="PTHR43599:SF3">
    <property type="entry name" value="SI:DKEY-6E2.2"/>
    <property type="match status" value="1"/>
</dbReference>
<dbReference type="Pfam" id="PF01259">
    <property type="entry name" value="SAICAR_synt"/>
    <property type="match status" value="1"/>
</dbReference>
<dbReference type="SUPFAM" id="SSF56104">
    <property type="entry name" value="SAICAR synthase-like"/>
    <property type="match status" value="1"/>
</dbReference>
<dbReference type="PROSITE" id="PS01057">
    <property type="entry name" value="SAICAR_SYNTHETASE_1"/>
    <property type="match status" value="1"/>
</dbReference>
<dbReference type="PROSITE" id="PS01058">
    <property type="entry name" value="SAICAR_SYNTHETASE_2"/>
    <property type="match status" value="1"/>
</dbReference>
<feature type="chain" id="PRO_1000122936" description="Phosphoribosylaminoimidazole-succinocarboxamide synthase">
    <location>
        <begin position="1"/>
        <end position="235"/>
    </location>
</feature>
<reference key="1">
    <citation type="journal article" date="2010" name="Genome Biol.">
        <title>Structure and dynamics of the pan-genome of Streptococcus pneumoniae and closely related species.</title>
        <authorList>
            <person name="Donati C."/>
            <person name="Hiller N.L."/>
            <person name="Tettelin H."/>
            <person name="Muzzi A."/>
            <person name="Croucher N.J."/>
            <person name="Angiuoli S.V."/>
            <person name="Oggioni M."/>
            <person name="Dunning Hotopp J.C."/>
            <person name="Hu F.Z."/>
            <person name="Riley D.R."/>
            <person name="Covacci A."/>
            <person name="Mitchell T.J."/>
            <person name="Bentley S.D."/>
            <person name="Kilian M."/>
            <person name="Ehrlich G.D."/>
            <person name="Rappuoli R."/>
            <person name="Moxon E.R."/>
            <person name="Masignani V."/>
        </authorList>
    </citation>
    <scope>NUCLEOTIDE SEQUENCE [LARGE SCALE GENOMIC DNA]</scope>
    <source>
        <strain>P1031</strain>
    </source>
</reference>
<keyword id="KW-0067">ATP-binding</keyword>
<keyword id="KW-0436">Ligase</keyword>
<keyword id="KW-0547">Nucleotide-binding</keyword>
<keyword id="KW-0658">Purine biosynthesis</keyword>
<comment type="catalytic activity">
    <reaction evidence="1">
        <text>5-amino-1-(5-phospho-D-ribosyl)imidazole-4-carboxylate + L-aspartate + ATP = (2S)-2-[5-amino-1-(5-phospho-beta-D-ribosyl)imidazole-4-carboxamido]succinate + ADP + phosphate + 2 H(+)</text>
        <dbReference type="Rhea" id="RHEA:22628"/>
        <dbReference type="ChEBI" id="CHEBI:15378"/>
        <dbReference type="ChEBI" id="CHEBI:29991"/>
        <dbReference type="ChEBI" id="CHEBI:30616"/>
        <dbReference type="ChEBI" id="CHEBI:43474"/>
        <dbReference type="ChEBI" id="CHEBI:58443"/>
        <dbReference type="ChEBI" id="CHEBI:77657"/>
        <dbReference type="ChEBI" id="CHEBI:456216"/>
        <dbReference type="EC" id="6.3.2.6"/>
    </reaction>
</comment>
<comment type="pathway">
    <text evidence="1">Purine metabolism; IMP biosynthesis via de novo pathway; 5-amino-1-(5-phospho-D-ribosyl)imidazole-4-carboxamide from 5-amino-1-(5-phospho-D-ribosyl)imidazole-4-carboxylate: step 1/2.</text>
</comment>
<comment type="similarity">
    <text evidence="1">Belongs to the SAICAR synthetase family.</text>
</comment>
<evidence type="ECO:0000255" key="1">
    <source>
        <dbReference type="HAMAP-Rule" id="MF_00137"/>
    </source>
</evidence>
<name>PUR7_STRZP</name>
<protein>
    <recommendedName>
        <fullName evidence="1">Phosphoribosylaminoimidazole-succinocarboxamide synthase</fullName>
        <ecNumber evidence="1">6.3.2.6</ecNumber>
    </recommendedName>
    <alternativeName>
        <fullName evidence="1">SAICAR synthetase</fullName>
    </alternativeName>
</protein>